<feature type="initiator methionine" description="Removed" evidence="1">
    <location>
        <position position="1"/>
    </location>
</feature>
<feature type="chain" id="PRO_0000056936" description="Putative asparagine synthetase [glutamine-hydrolyzing]">
    <location>
        <begin position="2"/>
        <end position="652"/>
    </location>
</feature>
<feature type="domain" description="Glutamine amidotransferase type-2" evidence="2">
    <location>
        <begin position="2"/>
        <end position="231"/>
    </location>
</feature>
<feature type="active site" description="For GATase activity" evidence="1">
    <location>
        <position position="2"/>
    </location>
</feature>
<feature type="binding site" evidence="1">
    <location>
        <begin position="60"/>
        <end position="64"/>
    </location>
    <ligand>
        <name>L-glutamine</name>
        <dbReference type="ChEBI" id="CHEBI:58359"/>
    </ligand>
</feature>
<feature type="binding site" evidence="1">
    <location>
        <begin position="89"/>
        <end position="91"/>
    </location>
    <ligand>
        <name>L-glutamine</name>
        <dbReference type="ChEBI" id="CHEBI:58359"/>
    </ligand>
</feature>
<feature type="binding site" evidence="1">
    <location>
        <position position="115"/>
    </location>
    <ligand>
        <name>L-glutamine</name>
        <dbReference type="ChEBI" id="CHEBI:58359"/>
    </ligand>
</feature>
<feature type="binding site" evidence="1">
    <location>
        <begin position="382"/>
        <end position="383"/>
    </location>
    <ligand>
        <name>ATP</name>
        <dbReference type="ChEBI" id="CHEBI:30616"/>
    </ligand>
</feature>
<feature type="site" description="Important for beta-aspartyl-AMP intermediate formation" evidence="1">
    <location>
        <position position="384"/>
    </location>
</feature>
<dbReference type="EC" id="6.3.5.4"/>
<dbReference type="EMBL" id="LT708304">
    <property type="protein sequence ID" value="SIU00832.1"/>
    <property type="molecule type" value="Genomic_DNA"/>
</dbReference>
<dbReference type="RefSeq" id="NP_855873.1">
    <property type="nucleotide sequence ID" value="NC_002945.3"/>
</dbReference>
<dbReference type="RefSeq" id="WP_003411413.1">
    <property type="nucleotide sequence ID" value="NC_002945.4"/>
</dbReference>
<dbReference type="SMR" id="P64248"/>
<dbReference type="KEGG" id="mbo:BQ2027_MB2224"/>
<dbReference type="PATRIC" id="fig|233413.5.peg.2440"/>
<dbReference type="UniPathway" id="UPA00134">
    <property type="reaction ID" value="UER00195"/>
</dbReference>
<dbReference type="Proteomes" id="UP000001419">
    <property type="component" value="Chromosome"/>
</dbReference>
<dbReference type="GO" id="GO:0005829">
    <property type="term" value="C:cytosol"/>
    <property type="evidence" value="ECO:0007669"/>
    <property type="project" value="TreeGrafter"/>
</dbReference>
<dbReference type="GO" id="GO:0004066">
    <property type="term" value="F:asparagine synthase (glutamine-hydrolyzing) activity"/>
    <property type="evidence" value="ECO:0007669"/>
    <property type="project" value="UniProtKB-EC"/>
</dbReference>
<dbReference type="GO" id="GO:0005524">
    <property type="term" value="F:ATP binding"/>
    <property type="evidence" value="ECO:0007669"/>
    <property type="project" value="UniProtKB-KW"/>
</dbReference>
<dbReference type="GO" id="GO:0070981">
    <property type="term" value="P:L-asparagine biosynthetic process"/>
    <property type="evidence" value="ECO:0007669"/>
    <property type="project" value="UniProtKB-UniPathway"/>
</dbReference>
<dbReference type="CDD" id="cd01991">
    <property type="entry name" value="Asn_synthase_B_C"/>
    <property type="match status" value="1"/>
</dbReference>
<dbReference type="CDD" id="cd00712">
    <property type="entry name" value="AsnB"/>
    <property type="match status" value="1"/>
</dbReference>
<dbReference type="Gene3D" id="3.60.20.10">
    <property type="entry name" value="Glutamine Phosphoribosylpyrophosphate, subunit 1, domain 1"/>
    <property type="match status" value="1"/>
</dbReference>
<dbReference type="Gene3D" id="3.40.50.620">
    <property type="entry name" value="HUPs"/>
    <property type="match status" value="1"/>
</dbReference>
<dbReference type="InterPro" id="IPR006426">
    <property type="entry name" value="Asn_synth_AEB"/>
</dbReference>
<dbReference type="InterPro" id="IPR001962">
    <property type="entry name" value="Asn_synthase"/>
</dbReference>
<dbReference type="InterPro" id="IPR051786">
    <property type="entry name" value="ASN_synthetase/amidase"/>
</dbReference>
<dbReference type="InterPro" id="IPR033738">
    <property type="entry name" value="AsnB_N"/>
</dbReference>
<dbReference type="InterPro" id="IPR017932">
    <property type="entry name" value="GATase_2_dom"/>
</dbReference>
<dbReference type="InterPro" id="IPR029055">
    <property type="entry name" value="Ntn_hydrolases_N"/>
</dbReference>
<dbReference type="InterPro" id="IPR014729">
    <property type="entry name" value="Rossmann-like_a/b/a_fold"/>
</dbReference>
<dbReference type="NCBIfam" id="TIGR01536">
    <property type="entry name" value="asn_synth_AEB"/>
    <property type="match status" value="1"/>
</dbReference>
<dbReference type="PANTHER" id="PTHR43284:SF1">
    <property type="entry name" value="ASPARAGINE SYNTHETASE"/>
    <property type="match status" value="1"/>
</dbReference>
<dbReference type="PANTHER" id="PTHR43284">
    <property type="entry name" value="ASPARAGINE SYNTHETASE (GLUTAMINE-HYDROLYZING)"/>
    <property type="match status" value="1"/>
</dbReference>
<dbReference type="Pfam" id="PF00733">
    <property type="entry name" value="Asn_synthase"/>
    <property type="match status" value="1"/>
</dbReference>
<dbReference type="Pfam" id="PF13537">
    <property type="entry name" value="GATase_7"/>
    <property type="match status" value="1"/>
</dbReference>
<dbReference type="PIRSF" id="PIRSF001589">
    <property type="entry name" value="Asn_synthetase_glu-h"/>
    <property type="match status" value="1"/>
</dbReference>
<dbReference type="SUPFAM" id="SSF52402">
    <property type="entry name" value="Adenine nucleotide alpha hydrolases-like"/>
    <property type="match status" value="1"/>
</dbReference>
<dbReference type="SUPFAM" id="SSF56235">
    <property type="entry name" value="N-terminal nucleophile aminohydrolases (Ntn hydrolases)"/>
    <property type="match status" value="1"/>
</dbReference>
<dbReference type="PROSITE" id="PS51278">
    <property type="entry name" value="GATASE_TYPE_2"/>
    <property type="match status" value="1"/>
</dbReference>
<protein>
    <recommendedName>
        <fullName>Putative asparagine synthetase [glutamine-hydrolyzing]</fullName>
        <ecNumber>6.3.5.4</ecNumber>
    </recommendedName>
</protein>
<name>ASNH_MYCBO</name>
<reference key="1">
    <citation type="journal article" date="2003" name="Proc. Natl. Acad. Sci. U.S.A.">
        <title>The complete genome sequence of Mycobacterium bovis.</title>
        <authorList>
            <person name="Garnier T."/>
            <person name="Eiglmeier K."/>
            <person name="Camus J.-C."/>
            <person name="Medina N."/>
            <person name="Mansoor H."/>
            <person name="Pryor M."/>
            <person name="Duthoy S."/>
            <person name="Grondin S."/>
            <person name="Lacroix C."/>
            <person name="Monsempe C."/>
            <person name="Simon S."/>
            <person name="Harris B."/>
            <person name="Atkin R."/>
            <person name="Doggett J."/>
            <person name="Mayes R."/>
            <person name="Keating L."/>
            <person name="Wheeler P.R."/>
            <person name="Parkhill J."/>
            <person name="Barrell B.G."/>
            <person name="Cole S.T."/>
            <person name="Gordon S.V."/>
            <person name="Hewinson R.G."/>
        </authorList>
    </citation>
    <scope>NUCLEOTIDE SEQUENCE [LARGE SCALE GENOMIC DNA]</scope>
    <source>
        <strain>ATCC BAA-935 / AF2122/97</strain>
    </source>
</reference>
<reference key="2">
    <citation type="journal article" date="2017" name="Genome Announc.">
        <title>Updated reference genome sequence and annotation of Mycobacterium bovis AF2122/97.</title>
        <authorList>
            <person name="Malone K.M."/>
            <person name="Farrell D."/>
            <person name="Stuber T.P."/>
            <person name="Schubert O.T."/>
            <person name="Aebersold R."/>
            <person name="Robbe-Austerman S."/>
            <person name="Gordon S.V."/>
        </authorList>
    </citation>
    <scope>NUCLEOTIDE SEQUENCE [LARGE SCALE GENOMIC DNA]</scope>
    <scope>GENOME REANNOTATION</scope>
    <source>
        <strain>ATCC BAA-935 / AF2122/97</strain>
    </source>
</reference>
<reference key="3">
    <citation type="journal article" date="2005" name="FEMS Microbiol. Lett.">
        <title>Thiol specific oxidative stress response in Mycobacteria.</title>
        <authorList>
            <person name="Dosanjh N.S."/>
            <person name="Rawat M."/>
            <person name="Chung J.-H."/>
            <person name="Av-Gay Y."/>
        </authorList>
    </citation>
    <scope>IDENTIFICATION BY MASS SPECTROMETRY</scope>
    <scope>INDUCTION</scope>
    <source>
        <strain>BCG / Pasteur</strain>
    </source>
</reference>
<gene>
    <name type="primary">asnB</name>
    <name type="ordered locus">BQ2027_MB2224</name>
</gene>
<accession>P64248</accession>
<accession>A0A1R3Y0J6</accession>
<accession>Q10374</accession>
<accession>X2BKF1</accession>
<proteinExistence type="evidence at protein level"/>
<keyword id="KW-0028">Amino-acid biosynthesis</keyword>
<keyword id="KW-0061">Asparagine biosynthesis</keyword>
<keyword id="KW-0067">ATP-binding</keyword>
<keyword id="KW-0315">Glutamine amidotransferase</keyword>
<keyword id="KW-0436">Ligase</keyword>
<keyword id="KW-0547">Nucleotide-binding</keyword>
<keyword id="KW-1185">Reference proteome</keyword>
<organism>
    <name type="scientific">Mycobacterium bovis (strain ATCC BAA-935 / AF2122/97)</name>
    <dbReference type="NCBI Taxonomy" id="233413"/>
    <lineage>
        <taxon>Bacteria</taxon>
        <taxon>Bacillati</taxon>
        <taxon>Actinomycetota</taxon>
        <taxon>Actinomycetes</taxon>
        <taxon>Mycobacteriales</taxon>
        <taxon>Mycobacteriaceae</taxon>
        <taxon>Mycobacterium</taxon>
        <taxon>Mycobacterium tuberculosis complex</taxon>
    </lineage>
</organism>
<comment type="catalytic activity">
    <reaction>
        <text>L-aspartate + L-glutamine + ATP + H2O = L-asparagine + L-glutamate + AMP + diphosphate + H(+)</text>
        <dbReference type="Rhea" id="RHEA:12228"/>
        <dbReference type="ChEBI" id="CHEBI:15377"/>
        <dbReference type="ChEBI" id="CHEBI:15378"/>
        <dbReference type="ChEBI" id="CHEBI:29985"/>
        <dbReference type="ChEBI" id="CHEBI:29991"/>
        <dbReference type="ChEBI" id="CHEBI:30616"/>
        <dbReference type="ChEBI" id="CHEBI:33019"/>
        <dbReference type="ChEBI" id="CHEBI:58048"/>
        <dbReference type="ChEBI" id="CHEBI:58359"/>
        <dbReference type="ChEBI" id="CHEBI:456215"/>
        <dbReference type="EC" id="6.3.5.4"/>
    </reaction>
</comment>
<comment type="pathway">
    <text>Amino-acid biosynthesis; L-asparagine biosynthesis; L-asparagine from L-aspartate (L-Gln route): step 1/1.</text>
</comment>
<comment type="induction">
    <text evidence="3">Induced in response to the thiol oxidant diamide.</text>
</comment>
<comment type="similarity">
    <text evidence="4">Belongs to the asparagine synthetase family.</text>
</comment>
<sequence>MCGLLAFVAAPAGAAGPEGADAASAIARASHLMRHRGPDESGTWHAVDGASGGVVFGFNRLSIIDIAHSHQPLRWGPPEAPDRYVLVFNGEIYNYLELRDELRTQHGAVFATDGDGEAILAGYHHWGTEVLQRLRGMFAFALWDTVTRELFCARDPFGIKPLFIATGAGGTAVASEKKCLLDLVELVGFDTEIDHRALQHYTVLQYVPEPETLHRGVRRLESGCFARIRADQLAPVITRYFVPRFAASPITNDNDQARYDEITAVLEDSVAKHMRADVTVGAFLSGGIDSTAIAALAIRHNPRLITFTTGFEREGFSEIDVAVASAEAIGARHIAKVVSADEFVAALPEIVWYLDEPVADPALVPLFFVAREARKHVKVVLSGEGADELFGGYTIYREPLSLRPFDYLPKPLRRSMGKVSKPLPEGMRGKSLLHRGSLTLEERYYGNARSFSGAQLREVLPGFRPDWTHTDVTAPVYAESAGWDPVARMQHIDLFTWLRGDILVKADKITMANSLELRVPFLDPEVFAVASRLPAGAKITRTTTKYALRRALEPIVPAHVLHRPKLGFPVPIRHWLRAGELLEWAYATVGSSQAGHLVDIAAVYRMLDEHRCGSSDHSRRLWTMLIFMLWHAIFVEHSVVPQISEPQYPVQL</sequence>
<evidence type="ECO:0000250" key="1"/>
<evidence type="ECO:0000255" key="2">
    <source>
        <dbReference type="PROSITE-ProRule" id="PRU00609"/>
    </source>
</evidence>
<evidence type="ECO:0000269" key="3">
    <source>
    </source>
</evidence>
<evidence type="ECO:0000305" key="4"/>